<gene>
    <name type="ORF">DDB_G0278295</name>
</gene>
<keyword id="KW-0325">Glycoprotein</keyword>
<keyword id="KW-0445">Lipid transport</keyword>
<keyword id="KW-1185">Reference proteome</keyword>
<keyword id="KW-0732">Signal</keyword>
<keyword id="KW-0813">Transport</keyword>
<evidence type="ECO:0000250" key="1"/>
<evidence type="ECO:0000255" key="2"/>
<evidence type="ECO:0000269" key="3">
    <source>
    </source>
</evidence>
<evidence type="ECO:0000305" key="4"/>
<accession>Q54YD2</accession>
<feature type="signal peptide" evidence="2">
    <location>
        <begin position="1"/>
        <end position="19"/>
    </location>
</feature>
<feature type="chain" id="PRO_0000389014" description="Putative phosphatidylglycerol/phosphatidylinositol transfer protein DDB_G0278295">
    <location>
        <begin position="20"/>
        <end position="141"/>
    </location>
</feature>
<feature type="glycosylation site" description="N-linked (GlcNAc...) asparagine" evidence="2">
    <location>
        <position position="82"/>
    </location>
</feature>
<feature type="glycosylation site" description="N-linked (GlcNAc...) asparagine" evidence="2">
    <location>
        <position position="104"/>
    </location>
</feature>
<proteinExistence type="evidence at transcript level"/>
<dbReference type="EMBL" id="AAFI02000023">
    <property type="protein sequence ID" value="EAL68320.1"/>
    <property type="molecule type" value="Genomic_DNA"/>
</dbReference>
<dbReference type="RefSeq" id="XP_642270.1">
    <property type="nucleotide sequence ID" value="XM_637178.1"/>
</dbReference>
<dbReference type="SMR" id="Q54YD2"/>
<dbReference type="FunCoup" id="Q54YD2">
    <property type="interactions" value="4"/>
</dbReference>
<dbReference type="GlyGen" id="Q54YD2">
    <property type="glycosylation" value="2 sites"/>
</dbReference>
<dbReference type="PaxDb" id="44689-DDB0205354"/>
<dbReference type="EnsemblProtists" id="EAL68320">
    <property type="protein sequence ID" value="EAL68320"/>
    <property type="gene ID" value="DDB_G0278295"/>
</dbReference>
<dbReference type="GeneID" id="8621479"/>
<dbReference type="KEGG" id="ddi:DDB_G0278295"/>
<dbReference type="dictyBase" id="DDB_G0278295"/>
<dbReference type="VEuPathDB" id="AmoebaDB:DDB_G0278295"/>
<dbReference type="eggNOG" id="KOG4680">
    <property type="taxonomic scope" value="Eukaryota"/>
</dbReference>
<dbReference type="HOGENOM" id="CLU_097982_2_0_1"/>
<dbReference type="InParanoid" id="Q54YD2"/>
<dbReference type="OMA" id="ASKYSYW"/>
<dbReference type="PhylomeDB" id="Q54YD2"/>
<dbReference type="Reactome" id="R-DDI-6798695">
    <property type="pathway name" value="Neutrophil degranulation"/>
</dbReference>
<dbReference type="Reactome" id="R-DDI-8964038">
    <property type="pathway name" value="LDL clearance"/>
</dbReference>
<dbReference type="PRO" id="PR:Q54YD2"/>
<dbReference type="Proteomes" id="UP000002195">
    <property type="component" value="Chromosome 3"/>
</dbReference>
<dbReference type="GO" id="GO:0032934">
    <property type="term" value="F:sterol binding"/>
    <property type="evidence" value="ECO:0000318"/>
    <property type="project" value="GO_Central"/>
</dbReference>
<dbReference type="GO" id="GO:0015918">
    <property type="term" value="P:sterol transport"/>
    <property type="evidence" value="ECO:0000318"/>
    <property type="project" value="GO_Central"/>
</dbReference>
<dbReference type="FunFam" id="2.70.220.10:FF:000005">
    <property type="entry name" value="Putative phosphatidylglycerol/phosphatidylinositol transfer protein DDB_G0282107"/>
    <property type="match status" value="1"/>
</dbReference>
<dbReference type="Gene3D" id="2.70.220.10">
    <property type="entry name" value="Ganglioside GM2 activator"/>
    <property type="match status" value="1"/>
</dbReference>
<dbReference type="InterPro" id="IPR036846">
    <property type="entry name" value="GM2-AP_sf"/>
</dbReference>
<dbReference type="InterPro" id="IPR014756">
    <property type="entry name" value="Ig_E-set"/>
</dbReference>
<dbReference type="InterPro" id="IPR003172">
    <property type="entry name" value="ML_dom"/>
</dbReference>
<dbReference type="InterPro" id="IPR039670">
    <property type="entry name" value="NPC2-like"/>
</dbReference>
<dbReference type="PANTHER" id="PTHR11306:SF60">
    <property type="entry name" value="COUNTIN-3-RELATED"/>
    <property type="match status" value="1"/>
</dbReference>
<dbReference type="PANTHER" id="PTHR11306">
    <property type="entry name" value="NIEMANN PICK TYPE C2 PROTEIN NPC2-RELATED"/>
    <property type="match status" value="1"/>
</dbReference>
<dbReference type="Pfam" id="PF02221">
    <property type="entry name" value="E1_DerP2_DerF2"/>
    <property type="match status" value="1"/>
</dbReference>
<dbReference type="SMART" id="SM00737">
    <property type="entry name" value="ML"/>
    <property type="match status" value="1"/>
</dbReference>
<dbReference type="SUPFAM" id="SSF81296">
    <property type="entry name" value="E set domains"/>
    <property type="match status" value="1"/>
</dbReference>
<name>Y8295_DICDI</name>
<organism>
    <name type="scientific">Dictyostelium discoideum</name>
    <name type="common">Social amoeba</name>
    <dbReference type="NCBI Taxonomy" id="44689"/>
    <lineage>
        <taxon>Eukaryota</taxon>
        <taxon>Amoebozoa</taxon>
        <taxon>Evosea</taxon>
        <taxon>Eumycetozoa</taxon>
        <taxon>Dictyostelia</taxon>
        <taxon>Dictyosteliales</taxon>
        <taxon>Dictyosteliaceae</taxon>
        <taxon>Dictyostelium</taxon>
    </lineage>
</organism>
<protein>
    <recommendedName>
        <fullName>Putative phosphatidylglycerol/phosphatidylinositol transfer protein DDB_G0278295</fullName>
    </recommendedName>
</protein>
<comment type="function">
    <text evidence="1">Catalyzes the intermembrane transfer of phosphatidylglycerol and phosphatidylinositol.</text>
</comment>
<comment type="subunit">
    <text evidence="1">Monomer.</text>
</comment>
<comment type="induction">
    <text evidence="3">Down-regulated by phagocytic stimuli.</text>
</comment>
<comment type="similarity">
    <text evidence="4">Belongs to the NPC2 family.</text>
</comment>
<reference key="1">
    <citation type="journal article" date="2005" name="Nature">
        <title>The genome of the social amoeba Dictyostelium discoideum.</title>
        <authorList>
            <person name="Eichinger L."/>
            <person name="Pachebat J.A."/>
            <person name="Gloeckner G."/>
            <person name="Rajandream M.A."/>
            <person name="Sucgang R."/>
            <person name="Berriman M."/>
            <person name="Song J."/>
            <person name="Olsen R."/>
            <person name="Szafranski K."/>
            <person name="Xu Q."/>
            <person name="Tunggal B."/>
            <person name="Kummerfeld S."/>
            <person name="Madera M."/>
            <person name="Konfortov B.A."/>
            <person name="Rivero F."/>
            <person name="Bankier A.T."/>
            <person name="Lehmann R."/>
            <person name="Hamlin N."/>
            <person name="Davies R."/>
            <person name="Gaudet P."/>
            <person name="Fey P."/>
            <person name="Pilcher K."/>
            <person name="Chen G."/>
            <person name="Saunders D."/>
            <person name="Sodergren E.J."/>
            <person name="Davis P."/>
            <person name="Kerhornou A."/>
            <person name="Nie X."/>
            <person name="Hall N."/>
            <person name="Anjard C."/>
            <person name="Hemphill L."/>
            <person name="Bason N."/>
            <person name="Farbrother P."/>
            <person name="Desany B."/>
            <person name="Just E."/>
            <person name="Morio T."/>
            <person name="Rost R."/>
            <person name="Churcher C.M."/>
            <person name="Cooper J."/>
            <person name="Haydock S."/>
            <person name="van Driessche N."/>
            <person name="Cronin A."/>
            <person name="Goodhead I."/>
            <person name="Muzny D.M."/>
            <person name="Mourier T."/>
            <person name="Pain A."/>
            <person name="Lu M."/>
            <person name="Harper D."/>
            <person name="Lindsay R."/>
            <person name="Hauser H."/>
            <person name="James K.D."/>
            <person name="Quiles M."/>
            <person name="Madan Babu M."/>
            <person name="Saito T."/>
            <person name="Buchrieser C."/>
            <person name="Wardroper A."/>
            <person name="Felder M."/>
            <person name="Thangavelu M."/>
            <person name="Johnson D."/>
            <person name="Knights A."/>
            <person name="Loulseged H."/>
            <person name="Mungall K.L."/>
            <person name="Oliver K."/>
            <person name="Price C."/>
            <person name="Quail M.A."/>
            <person name="Urushihara H."/>
            <person name="Hernandez J."/>
            <person name="Rabbinowitsch E."/>
            <person name="Steffen D."/>
            <person name="Sanders M."/>
            <person name="Ma J."/>
            <person name="Kohara Y."/>
            <person name="Sharp S."/>
            <person name="Simmonds M.N."/>
            <person name="Spiegler S."/>
            <person name="Tivey A."/>
            <person name="Sugano S."/>
            <person name="White B."/>
            <person name="Walker D."/>
            <person name="Woodward J.R."/>
            <person name="Winckler T."/>
            <person name="Tanaka Y."/>
            <person name="Shaulsky G."/>
            <person name="Schleicher M."/>
            <person name="Weinstock G.M."/>
            <person name="Rosenthal A."/>
            <person name="Cox E.C."/>
            <person name="Chisholm R.L."/>
            <person name="Gibbs R.A."/>
            <person name="Loomis W.F."/>
            <person name="Platzer M."/>
            <person name="Kay R.R."/>
            <person name="Williams J.G."/>
            <person name="Dear P.H."/>
            <person name="Noegel A.A."/>
            <person name="Barrell B.G."/>
            <person name="Kuspa A."/>
        </authorList>
    </citation>
    <scope>NUCLEOTIDE SEQUENCE [LARGE SCALE GENOMIC DNA]</scope>
    <source>
        <strain>AX4</strain>
    </source>
</reference>
<reference key="2">
    <citation type="journal article" date="2008" name="BMC Genomics">
        <title>Genome-wide transcriptional changes induced by phagocytosis or growth on bacteria in Dictyostelium.</title>
        <authorList>
            <person name="Sillo A."/>
            <person name="Bloomfield G."/>
            <person name="Balest A."/>
            <person name="Balbo A."/>
            <person name="Pergolizzi B."/>
            <person name="Peracino B."/>
            <person name="Skelton J."/>
            <person name="Ivens A."/>
            <person name="Bozzaro S."/>
        </authorList>
    </citation>
    <scope>INDUCTION [LARGE SCALE ANALYSIS]</scope>
</reference>
<sequence>MRLLLALFFVLALVSPSFTQVWSNCGTAADKFQITNVVLDPPTPVKGQDITISASGILDETVTGGNVAVKVKYGFITLINENVSICSSQDPLACPIAAGDYQKNMTEMIPSDAPSGKYTGNVVITDQNNAEIACIDVDINL</sequence>